<dbReference type="EMBL" id="BA000039">
    <property type="protein sequence ID" value="BAC08062.1"/>
    <property type="molecule type" value="Genomic_DNA"/>
</dbReference>
<dbReference type="RefSeq" id="NP_681300.1">
    <property type="nucleotide sequence ID" value="NC_004113.1"/>
</dbReference>
<dbReference type="RefSeq" id="WP_011056361.1">
    <property type="nucleotide sequence ID" value="NC_004113.1"/>
</dbReference>
<dbReference type="SMR" id="Q8DLI1"/>
<dbReference type="STRING" id="197221.gene:10747099"/>
<dbReference type="EnsemblBacteria" id="BAC08062">
    <property type="protein sequence ID" value="BAC08062"/>
    <property type="gene ID" value="BAC08062"/>
</dbReference>
<dbReference type="KEGG" id="tel:tlr0510"/>
<dbReference type="PATRIC" id="fig|197221.4.peg.537"/>
<dbReference type="eggNOG" id="COG1219">
    <property type="taxonomic scope" value="Bacteria"/>
</dbReference>
<dbReference type="Proteomes" id="UP000000440">
    <property type="component" value="Chromosome"/>
</dbReference>
<dbReference type="GO" id="GO:0009376">
    <property type="term" value="C:HslUV protease complex"/>
    <property type="evidence" value="ECO:0007669"/>
    <property type="project" value="TreeGrafter"/>
</dbReference>
<dbReference type="GO" id="GO:0005524">
    <property type="term" value="F:ATP binding"/>
    <property type="evidence" value="ECO:0007669"/>
    <property type="project" value="UniProtKB-UniRule"/>
</dbReference>
<dbReference type="GO" id="GO:0016887">
    <property type="term" value="F:ATP hydrolysis activity"/>
    <property type="evidence" value="ECO:0007669"/>
    <property type="project" value="InterPro"/>
</dbReference>
<dbReference type="GO" id="GO:0140662">
    <property type="term" value="F:ATP-dependent protein folding chaperone"/>
    <property type="evidence" value="ECO:0007669"/>
    <property type="project" value="InterPro"/>
</dbReference>
<dbReference type="GO" id="GO:0046983">
    <property type="term" value="F:protein dimerization activity"/>
    <property type="evidence" value="ECO:0007669"/>
    <property type="project" value="InterPro"/>
</dbReference>
<dbReference type="GO" id="GO:0051082">
    <property type="term" value="F:unfolded protein binding"/>
    <property type="evidence" value="ECO:0007669"/>
    <property type="project" value="UniProtKB-UniRule"/>
</dbReference>
<dbReference type="GO" id="GO:0008270">
    <property type="term" value="F:zinc ion binding"/>
    <property type="evidence" value="ECO:0007669"/>
    <property type="project" value="InterPro"/>
</dbReference>
<dbReference type="GO" id="GO:0051301">
    <property type="term" value="P:cell division"/>
    <property type="evidence" value="ECO:0007669"/>
    <property type="project" value="TreeGrafter"/>
</dbReference>
<dbReference type="GO" id="GO:0051603">
    <property type="term" value="P:proteolysis involved in protein catabolic process"/>
    <property type="evidence" value="ECO:0007669"/>
    <property type="project" value="TreeGrafter"/>
</dbReference>
<dbReference type="CDD" id="cd19497">
    <property type="entry name" value="RecA-like_ClpX"/>
    <property type="match status" value="1"/>
</dbReference>
<dbReference type="FunFam" id="1.10.8.60:FF:000002">
    <property type="entry name" value="ATP-dependent Clp protease ATP-binding subunit ClpX"/>
    <property type="match status" value="1"/>
</dbReference>
<dbReference type="FunFam" id="3.40.50.300:FF:000005">
    <property type="entry name" value="ATP-dependent Clp protease ATP-binding subunit ClpX"/>
    <property type="match status" value="1"/>
</dbReference>
<dbReference type="Gene3D" id="1.10.8.60">
    <property type="match status" value="1"/>
</dbReference>
<dbReference type="Gene3D" id="6.20.220.10">
    <property type="entry name" value="ClpX chaperone, C4-type zinc finger domain"/>
    <property type="match status" value="1"/>
</dbReference>
<dbReference type="Gene3D" id="3.40.50.300">
    <property type="entry name" value="P-loop containing nucleotide triphosphate hydrolases"/>
    <property type="match status" value="1"/>
</dbReference>
<dbReference type="HAMAP" id="MF_00175">
    <property type="entry name" value="ClpX"/>
    <property type="match status" value="1"/>
</dbReference>
<dbReference type="InterPro" id="IPR003593">
    <property type="entry name" value="AAA+_ATPase"/>
</dbReference>
<dbReference type="InterPro" id="IPR050052">
    <property type="entry name" value="ATP-dep_Clp_protease_ClpX"/>
</dbReference>
<dbReference type="InterPro" id="IPR003959">
    <property type="entry name" value="ATPase_AAA_core"/>
</dbReference>
<dbReference type="InterPro" id="IPR019489">
    <property type="entry name" value="Clp_ATPase_C"/>
</dbReference>
<dbReference type="InterPro" id="IPR004487">
    <property type="entry name" value="Clp_protease_ATP-bd_su_ClpX"/>
</dbReference>
<dbReference type="InterPro" id="IPR046425">
    <property type="entry name" value="ClpX_bact"/>
</dbReference>
<dbReference type="InterPro" id="IPR027417">
    <property type="entry name" value="P-loop_NTPase"/>
</dbReference>
<dbReference type="InterPro" id="IPR010603">
    <property type="entry name" value="Znf_CppX_C4"/>
</dbReference>
<dbReference type="InterPro" id="IPR038366">
    <property type="entry name" value="Znf_CppX_C4_sf"/>
</dbReference>
<dbReference type="NCBIfam" id="TIGR00382">
    <property type="entry name" value="clpX"/>
    <property type="match status" value="1"/>
</dbReference>
<dbReference type="NCBIfam" id="NF003745">
    <property type="entry name" value="PRK05342.1"/>
    <property type="match status" value="1"/>
</dbReference>
<dbReference type="PANTHER" id="PTHR48102:SF7">
    <property type="entry name" value="ATP-DEPENDENT CLP PROTEASE ATP-BINDING SUBUNIT CLPX-LIKE, MITOCHONDRIAL"/>
    <property type="match status" value="1"/>
</dbReference>
<dbReference type="PANTHER" id="PTHR48102">
    <property type="entry name" value="ATP-DEPENDENT CLP PROTEASE ATP-BINDING SUBUNIT CLPX-LIKE, MITOCHONDRIAL-RELATED"/>
    <property type="match status" value="1"/>
</dbReference>
<dbReference type="Pfam" id="PF07724">
    <property type="entry name" value="AAA_2"/>
    <property type="match status" value="1"/>
</dbReference>
<dbReference type="Pfam" id="PF10431">
    <property type="entry name" value="ClpB_D2-small"/>
    <property type="match status" value="1"/>
</dbReference>
<dbReference type="Pfam" id="PF06689">
    <property type="entry name" value="zf-C4_ClpX"/>
    <property type="match status" value="1"/>
</dbReference>
<dbReference type="SMART" id="SM00382">
    <property type="entry name" value="AAA"/>
    <property type="match status" value="1"/>
</dbReference>
<dbReference type="SMART" id="SM01086">
    <property type="entry name" value="ClpB_D2-small"/>
    <property type="match status" value="1"/>
</dbReference>
<dbReference type="SMART" id="SM00994">
    <property type="entry name" value="zf-C4_ClpX"/>
    <property type="match status" value="1"/>
</dbReference>
<dbReference type="SUPFAM" id="SSF57716">
    <property type="entry name" value="Glucocorticoid receptor-like (DNA-binding domain)"/>
    <property type="match status" value="1"/>
</dbReference>
<dbReference type="SUPFAM" id="SSF52540">
    <property type="entry name" value="P-loop containing nucleoside triphosphate hydrolases"/>
    <property type="match status" value="1"/>
</dbReference>
<dbReference type="PROSITE" id="PS51902">
    <property type="entry name" value="CLPX_ZB"/>
    <property type="match status" value="1"/>
</dbReference>
<accession>Q8DLI1</accession>
<gene>
    <name evidence="1" type="primary">clpX</name>
    <name type="ordered locus">tlr0510</name>
</gene>
<sequence>MAKYDTHLKCSFCGKSQEQVRKLIAGPGVYICDECVELCNEILDEELATVPNAAAPRRESTPSRSPRSTPRSRPLSQVPKPRQIKEFLDKHVVGQHEAKKILAVAVYNHYKRLSLLDSDQRGDDNVELQKSNILLIGPTGSGKTLSAQTLAKLLDVPFAVADATTLTEAGYVGEDVENILLRLLQNANMDVEEAQRGIIYIDEIDKIARKSENPSITRDVSGEGVQQALLKILEGTIANVPPQGGRKHPYQDCIQIDTTNILFICGGAFVGLEKTIEQRVGKKAMGFVRDGEPLPKEKRSADILKQLEPHDLVKYGMIPEFIGRIPVVAVLEPLDVAALADILTQPQNALLKQYQKLMRMDSVELRFEPAAVEAIAQEAYRRKTGARALRAIVEEIMLDVMYELPSRKDLRECTITPEMVEKRSTAELLLHPSSLPTLSA</sequence>
<reference key="1">
    <citation type="journal article" date="2002" name="DNA Res.">
        <title>Complete genome structure of the thermophilic cyanobacterium Thermosynechococcus elongatus BP-1.</title>
        <authorList>
            <person name="Nakamura Y."/>
            <person name="Kaneko T."/>
            <person name="Sato S."/>
            <person name="Ikeuchi M."/>
            <person name="Katoh H."/>
            <person name="Sasamoto S."/>
            <person name="Watanabe A."/>
            <person name="Iriguchi M."/>
            <person name="Kawashima K."/>
            <person name="Kimura T."/>
            <person name="Kishida Y."/>
            <person name="Kiyokawa C."/>
            <person name="Kohara M."/>
            <person name="Matsumoto M."/>
            <person name="Matsuno A."/>
            <person name="Nakazaki N."/>
            <person name="Shimpo S."/>
            <person name="Sugimoto M."/>
            <person name="Takeuchi C."/>
            <person name="Yamada M."/>
            <person name="Tabata S."/>
        </authorList>
    </citation>
    <scope>NUCLEOTIDE SEQUENCE [LARGE SCALE GENOMIC DNA]</scope>
    <source>
        <strain>NIES-2133 / IAM M-273 / BP-1</strain>
    </source>
</reference>
<evidence type="ECO:0000255" key="1">
    <source>
        <dbReference type="HAMAP-Rule" id="MF_00175"/>
    </source>
</evidence>
<evidence type="ECO:0000255" key="2">
    <source>
        <dbReference type="PROSITE-ProRule" id="PRU01250"/>
    </source>
</evidence>
<evidence type="ECO:0000256" key="3">
    <source>
        <dbReference type="SAM" id="MobiDB-lite"/>
    </source>
</evidence>
<keyword id="KW-0067">ATP-binding</keyword>
<keyword id="KW-0143">Chaperone</keyword>
<keyword id="KW-0479">Metal-binding</keyword>
<keyword id="KW-0547">Nucleotide-binding</keyword>
<keyword id="KW-1185">Reference proteome</keyword>
<keyword id="KW-0862">Zinc</keyword>
<name>CLPX_THEVB</name>
<feature type="chain" id="PRO_0000160439" description="ATP-dependent Clp protease ATP-binding subunit ClpX">
    <location>
        <begin position="1"/>
        <end position="440"/>
    </location>
</feature>
<feature type="domain" description="ClpX-type ZB" evidence="2">
    <location>
        <begin position="1"/>
        <end position="51"/>
    </location>
</feature>
<feature type="region of interest" description="Disordered" evidence="3">
    <location>
        <begin position="53"/>
        <end position="80"/>
    </location>
</feature>
<feature type="compositionally biased region" description="Low complexity" evidence="3">
    <location>
        <begin position="62"/>
        <end position="74"/>
    </location>
</feature>
<feature type="binding site" evidence="2">
    <location>
        <position position="10"/>
    </location>
    <ligand>
        <name>Zn(2+)</name>
        <dbReference type="ChEBI" id="CHEBI:29105"/>
    </ligand>
</feature>
<feature type="binding site" evidence="2">
    <location>
        <position position="13"/>
    </location>
    <ligand>
        <name>Zn(2+)</name>
        <dbReference type="ChEBI" id="CHEBI:29105"/>
    </ligand>
</feature>
<feature type="binding site" evidence="2">
    <location>
        <position position="32"/>
    </location>
    <ligand>
        <name>Zn(2+)</name>
        <dbReference type="ChEBI" id="CHEBI:29105"/>
    </ligand>
</feature>
<feature type="binding site" evidence="2">
    <location>
        <position position="35"/>
    </location>
    <ligand>
        <name>Zn(2+)</name>
        <dbReference type="ChEBI" id="CHEBI:29105"/>
    </ligand>
</feature>
<feature type="binding site" evidence="1">
    <location>
        <begin position="138"/>
        <end position="145"/>
    </location>
    <ligand>
        <name>ATP</name>
        <dbReference type="ChEBI" id="CHEBI:30616"/>
    </ligand>
</feature>
<comment type="function">
    <text evidence="1">ATP-dependent specificity component of the Clp protease. It directs the protease to specific substrates. Can perform chaperone functions in the absence of ClpP.</text>
</comment>
<comment type="subunit">
    <text evidence="1">Component of the ClpX-ClpP complex. Forms a hexameric ring that, in the presence of ATP, binds to fourteen ClpP subunits assembled into a disk-like structure with a central cavity, resembling the structure of eukaryotic proteasomes.</text>
</comment>
<comment type="similarity">
    <text evidence="1">Belongs to the ClpX chaperone family.</text>
</comment>
<proteinExistence type="inferred from homology"/>
<organism>
    <name type="scientific">Thermosynechococcus vestitus (strain NIES-2133 / IAM M-273 / BP-1)</name>
    <dbReference type="NCBI Taxonomy" id="197221"/>
    <lineage>
        <taxon>Bacteria</taxon>
        <taxon>Bacillati</taxon>
        <taxon>Cyanobacteriota</taxon>
        <taxon>Cyanophyceae</taxon>
        <taxon>Acaryochloridales</taxon>
        <taxon>Thermosynechococcaceae</taxon>
        <taxon>Thermosynechococcus</taxon>
    </lineage>
</organism>
<protein>
    <recommendedName>
        <fullName evidence="1">ATP-dependent Clp protease ATP-binding subunit ClpX</fullName>
    </recommendedName>
</protein>